<feature type="chain" id="PRO_0000383829" description="Hydroxyethylthiazole kinase">
    <location>
        <begin position="1"/>
        <end position="276"/>
    </location>
</feature>
<feature type="binding site" evidence="1">
    <location>
        <position position="126"/>
    </location>
    <ligand>
        <name>ATP</name>
        <dbReference type="ChEBI" id="CHEBI:30616"/>
    </ligand>
</feature>
<feature type="binding site" evidence="1">
    <location>
        <position position="172"/>
    </location>
    <ligand>
        <name>ATP</name>
        <dbReference type="ChEBI" id="CHEBI:30616"/>
    </ligand>
</feature>
<feature type="binding site" evidence="1">
    <location>
        <position position="199"/>
    </location>
    <ligand>
        <name>substrate</name>
    </ligand>
</feature>
<name>THIM_BURP6</name>
<protein>
    <recommendedName>
        <fullName evidence="1">Hydroxyethylthiazole kinase</fullName>
        <ecNumber evidence="1">2.7.1.50</ecNumber>
    </recommendedName>
    <alternativeName>
        <fullName evidence="1">4-methyl-5-beta-hydroxyethylthiazole kinase</fullName>
        <shortName evidence="1">TH kinase</shortName>
        <shortName evidence="1">Thz kinase</shortName>
    </alternativeName>
</protein>
<evidence type="ECO:0000255" key="1">
    <source>
        <dbReference type="HAMAP-Rule" id="MF_00228"/>
    </source>
</evidence>
<evidence type="ECO:0000305" key="2"/>
<sequence>MESISWNTPSVRDALAAVKRDAPFVYGLTNYVAANLSANVLLAVGAAPAIGAAADWPARFGAGANALWINTAALMSSGADTLLTAARAASKAGTRWVLDPVALGAGAPEYDAIVRDLLALRPTVIRGNASELIALAGGTAAGKGVDTTASPESALAFIGDLARRSGAVVAVSGPTDYVTDGVATLAVAGGDARLTRVTGAGCALGALIAALLAQRGAALAAASAAHAIYATAAERAADARGTASFAVRFVDELSLLDPAESSRDRSAGQIGAKRRE</sequence>
<dbReference type="EC" id="2.7.1.50" evidence="1"/>
<dbReference type="EMBL" id="CP000571">
    <property type="protein sequence ID" value="ABN86382.1"/>
    <property type="status" value="ALT_INIT"/>
    <property type="molecule type" value="Genomic_DNA"/>
</dbReference>
<dbReference type="RefSeq" id="WP_004542754.1">
    <property type="nucleotide sequence ID" value="NC_009075.1"/>
</dbReference>
<dbReference type="SMR" id="A3NJS6"/>
<dbReference type="KEGG" id="bpd:BURPS668_A1601"/>
<dbReference type="HOGENOM" id="CLU_019943_0_1_4"/>
<dbReference type="UniPathway" id="UPA00060">
    <property type="reaction ID" value="UER00139"/>
</dbReference>
<dbReference type="GO" id="GO:0005524">
    <property type="term" value="F:ATP binding"/>
    <property type="evidence" value="ECO:0007669"/>
    <property type="project" value="UniProtKB-UniRule"/>
</dbReference>
<dbReference type="GO" id="GO:0004417">
    <property type="term" value="F:hydroxyethylthiazole kinase activity"/>
    <property type="evidence" value="ECO:0007669"/>
    <property type="project" value="UniProtKB-UniRule"/>
</dbReference>
<dbReference type="GO" id="GO:0000287">
    <property type="term" value="F:magnesium ion binding"/>
    <property type="evidence" value="ECO:0007669"/>
    <property type="project" value="UniProtKB-UniRule"/>
</dbReference>
<dbReference type="GO" id="GO:0009228">
    <property type="term" value="P:thiamine biosynthetic process"/>
    <property type="evidence" value="ECO:0007669"/>
    <property type="project" value="UniProtKB-KW"/>
</dbReference>
<dbReference type="GO" id="GO:0009229">
    <property type="term" value="P:thiamine diphosphate biosynthetic process"/>
    <property type="evidence" value="ECO:0007669"/>
    <property type="project" value="UniProtKB-UniRule"/>
</dbReference>
<dbReference type="Gene3D" id="3.40.1190.20">
    <property type="match status" value="1"/>
</dbReference>
<dbReference type="HAMAP" id="MF_00228">
    <property type="entry name" value="Thz_kinase"/>
    <property type="match status" value="1"/>
</dbReference>
<dbReference type="InterPro" id="IPR000417">
    <property type="entry name" value="Hyethyz_kinase"/>
</dbReference>
<dbReference type="InterPro" id="IPR029056">
    <property type="entry name" value="Ribokinase-like"/>
</dbReference>
<dbReference type="Pfam" id="PF02110">
    <property type="entry name" value="HK"/>
    <property type="match status" value="1"/>
</dbReference>
<dbReference type="PIRSF" id="PIRSF000513">
    <property type="entry name" value="Thz_kinase"/>
    <property type="match status" value="1"/>
</dbReference>
<dbReference type="PRINTS" id="PR01099">
    <property type="entry name" value="HYETHTZKNASE"/>
</dbReference>
<dbReference type="SUPFAM" id="SSF53613">
    <property type="entry name" value="Ribokinase-like"/>
    <property type="match status" value="1"/>
</dbReference>
<proteinExistence type="inferred from homology"/>
<accession>A3NJS6</accession>
<comment type="function">
    <text evidence="1">Catalyzes the phosphorylation of the hydroxyl group of 4-methyl-5-beta-hydroxyethylthiazole (THZ).</text>
</comment>
<comment type="catalytic activity">
    <reaction evidence="1">
        <text>5-(2-hydroxyethyl)-4-methylthiazole + ATP = 4-methyl-5-(2-phosphooxyethyl)-thiazole + ADP + H(+)</text>
        <dbReference type="Rhea" id="RHEA:24212"/>
        <dbReference type="ChEBI" id="CHEBI:15378"/>
        <dbReference type="ChEBI" id="CHEBI:17957"/>
        <dbReference type="ChEBI" id="CHEBI:30616"/>
        <dbReference type="ChEBI" id="CHEBI:58296"/>
        <dbReference type="ChEBI" id="CHEBI:456216"/>
        <dbReference type="EC" id="2.7.1.50"/>
    </reaction>
</comment>
<comment type="cofactor">
    <cofactor evidence="1">
        <name>Mg(2+)</name>
        <dbReference type="ChEBI" id="CHEBI:18420"/>
    </cofactor>
</comment>
<comment type="pathway">
    <text evidence="1">Cofactor biosynthesis; thiamine diphosphate biosynthesis; 4-methyl-5-(2-phosphoethyl)-thiazole from 5-(2-hydroxyethyl)-4-methylthiazole: step 1/1.</text>
</comment>
<comment type="similarity">
    <text evidence="1">Belongs to the Thz kinase family.</text>
</comment>
<comment type="sequence caution" evidence="2">
    <conflict type="erroneous initiation">
        <sequence resource="EMBL-CDS" id="ABN86382"/>
    </conflict>
</comment>
<organism>
    <name type="scientific">Burkholderia pseudomallei (strain 668)</name>
    <dbReference type="NCBI Taxonomy" id="320373"/>
    <lineage>
        <taxon>Bacteria</taxon>
        <taxon>Pseudomonadati</taxon>
        <taxon>Pseudomonadota</taxon>
        <taxon>Betaproteobacteria</taxon>
        <taxon>Burkholderiales</taxon>
        <taxon>Burkholderiaceae</taxon>
        <taxon>Burkholderia</taxon>
        <taxon>pseudomallei group</taxon>
    </lineage>
</organism>
<reference key="1">
    <citation type="journal article" date="2010" name="Genome Biol. Evol.">
        <title>Continuing evolution of Burkholderia mallei through genome reduction and large-scale rearrangements.</title>
        <authorList>
            <person name="Losada L."/>
            <person name="Ronning C.M."/>
            <person name="DeShazer D."/>
            <person name="Woods D."/>
            <person name="Fedorova N."/>
            <person name="Kim H.S."/>
            <person name="Shabalina S.A."/>
            <person name="Pearson T.R."/>
            <person name="Brinkac L."/>
            <person name="Tan P."/>
            <person name="Nandi T."/>
            <person name="Crabtree J."/>
            <person name="Badger J."/>
            <person name="Beckstrom-Sternberg S."/>
            <person name="Saqib M."/>
            <person name="Schutzer S.E."/>
            <person name="Keim P."/>
            <person name="Nierman W.C."/>
        </authorList>
    </citation>
    <scope>NUCLEOTIDE SEQUENCE [LARGE SCALE GENOMIC DNA]</scope>
    <source>
        <strain>668</strain>
    </source>
</reference>
<gene>
    <name evidence="1" type="primary">thiM</name>
    <name type="ordered locus">BURPS668_A1601</name>
</gene>
<keyword id="KW-0067">ATP-binding</keyword>
<keyword id="KW-0418">Kinase</keyword>
<keyword id="KW-0460">Magnesium</keyword>
<keyword id="KW-0479">Metal-binding</keyword>
<keyword id="KW-0547">Nucleotide-binding</keyword>
<keyword id="KW-0784">Thiamine biosynthesis</keyword>
<keyword id="KW-0808">Transferase</keyword>